<protein>
    <recommendedName>
        <fullName evidence="8">Auxin-binding protein 1</fullName>
        <shortName evidence="8">ABP</shortName>
    </recommendedName>
    <alternativeName>
        <fullName evidence="9">ERABP1</fullName>
    </alternativeName>
</protein>
<keyword id="KW-0002">3D-structure</keyword>
<keyword id="KW-0927">Auxin signaling pathway</keyword>
<keyword id="KW-0903">Direct protein sequencing</keyword>
<keyword id="KW-1015">Disulfide bond</keyword>
<keyword id="KW-0256">Endoplasmic reticulum</keyword>
<keyword id="KW-0325">Glycoprotein</keyword>
<keyword id="KW-0479">Metal-binding</keyword>
<keyword id="KW-0675">Receptor</keyword>
<keyword id="KW-1185">Reference proteome</keyword>
<keyword id="KW-0732">Signal</keyword>
<keyword id="KW-0862">Zinc</keyword>
<proteinExistence type="evidence at protein level"/>
<comment type="function">
    <text evidence="8">Receptor for the plant hormone auxin.</text>
</comment>
<comment type="subunit">
    <text evidence="2">Homodimer.</text>
</comment>
<comment type="subcellular location">
    <subcellularLocation>
        <location evidence="5">Endoplasmic reticulum lumen</location>
    </subcellularLocation>
</comment>
<comment type="tissue specificity">
    <text evidence="6">Expressed in roots, coleoptiles, leaves, stems, tassels and ears.</text>
</comment>
<comment type="PTM">
    <text evidence="2 5">Glycosylated.</text>
</comment>
<comment type="caution">
    <text evidence="10">Was originally thought to have a disulfide bond between Cys-40 and Cys-99.</text>
</comment>
<organism>
    <name type="scientific">Zea mays</name>
    <name type="common">Maize</name>
    <dbReference type="NCBI Taxonomy" id="4577"/>
    <lineage>
        <taxon>Eukaryota</taxon>
        <taxon>Viridiplantae</taxon>
        <taxon>Streptophyta</taxon>
        <taxon>Embryophyta</taxon>
        <taxon>Tracheophyta</taxon>
        <taxon>Spermatophyta</taxon>
        <taxon>Magnoliopsida</taxon>
        <taxon>Liliopsida</taxon>
        <taxon>Poales</taxon>
        <taxon>Poaceae</taxon>
        <taxon>PACMAD clade</taxon>
        <taxon>Panicoideae</taxon>
        <taxon>Andropogonodae</taxon>
        <taxon>Andropogoneae</taxon>
        <taxon>Tripsacinae</taxon>
        <taxon>Zea</taxon>
    </lineage>
</organism>
<gene>
    <name evidence="8" type="primary">ABP1</name>
    <name evidence="7" type="synonym">AUX311</name>
</gene>
<dbReference type="EMBL" id="X16309">
    <property type="protein sequence ID" value="CAA34376.1"/>
    <property type="molecule type" value="mRNA"/>
</dbReference>
<dbReference type="EMBL" id="J04550">
    <property type="protein sequence ID" value="AAA33436.1"/>
    <property type="molecule type" value="mRNA"/>
</dbReference>
<dbReference type="EMBL" id="X56737">
    <property type="protein sequence ID" value="CAA40061.1"/>
    <property type="molecule type" value="Genomic_DNA"/>
</dbReference>
<dbReference type="EMBL" id="X16308">
    <property type="protein sequence ID" value="CAA34375.1"/>
    <property type="molecule type" value="mRNA"/>
</dbReference>
<dbReference type="EMBL" id="S53630">
    <property type="protein sequence ID" value="AAB25115.1"/>
    <property type="molecule type" value="mRNA"/>
</dbReference>
<dbReference type="EMBL" id="L08425">
    <property type="protein sequence ID" value="AAA33430.1"/>
    <property type="molecule type" value="Genomic_DNA"/>
</dbReference>
<dbReference type="PIR" id="S16262">
    <property type="entry name" value="S16262"/>
</dbReference>
<dbReference type="PDB" id="1LR5">
    <property type="method" value="X-ray"/>
    <property type="resolution" value="1.90 A"/>
    <property type="chains" value="A/B/C/D=39-201"/>
</dbReference>
<dbReference type="PDB" id="1LRH">
    <property type="method" value="X-ray"/>
    <property type="resolution" value="1.90 A"/>
    <property type="chains" value="A/B/C/D=39-201"/>
</dbReference>
<dbReference type="PDBsum" id="1LR5"/>
<dbReference type="PDBsum" id="1LRH"/>
<dbReference type="SMR" id="P13689"/>
<dbReference type="ELM" id="P13689"/>
<dbReference type="STRING" id="4577.P13689"/>
<dbReference type="GlyCosmos" id="P13689">
    <property type="glycosylation" value="1 site, No reported glycans"/>
</dbReference>
<dbReference type="iPTMnet" id="P13689"/>
<dbReference type="PaxDb" id="4577-GRMZM2G116204_P01"/>
<dbReference type="MaizeGDB" id="25342"/>
<dbReference type="eggNOG" id="ENOG502RXJU">
    <property type="taxonomic scope" value="Eukaryota"/>
</dbReference>
<dbReference type="InParanoid" id="P13689"/>
<dbReference type="EvolutionaryTrace" id="P13689"/>
<dbReference type="Proteomes" id="UP000007305">
    <property type="component" value="Unplaced"/>
</dbReference>
<dbReference type="ExpressionAtlas" id="P13689">
    <property type="expression patterns" value="baseline and differential"/>
</dbReference>
<dbReference type="GO" id="GO:0005788">
    <property type="term" value="C:endoplasmic reticulum lumen"/>
    <property type="evidence" value="ECO:0007669"/>
    <property type="project" value="UniProtKB-SubCell"/>
</dbReference>
<dbReference type="GO" id="GO:0010011">
    <property type="term" value="F:auxin binding"/>
    <property type="evidence" value="ECO:0000314"/>
    <property type="project" value="UniProtKB"/>
</dbReference>
<dbReference type="GO" id="GO:0008270">
    <property type="term" value="F:zinc ion binding"/>
    <property type="evidence" value="ECO:0000314"/>
    <property type="project" value="UniProtKB"/>
</dbReference>
<dbReference type="GO" id="GO:0009734">
    <property type="term" value="P:auxin-activated signaling pathway"/>
    <property type="evidence" value="ECO:0007669"/>
    <property type="project" value="UniProtKB-KW"/>
</dbReference>
<dbReference type="GO" id="GO:0000911">
    <property type="term" value="P:cytokinesis by cell plate formation"/>
    <property type="evidence" value="ECO:0000318"/>
    <property type="project" value="GO_Central"/>
</dbReference>
<dbReference type="GO" id="GO:0051781">
    <property type="term" value="P:positive regulation of cell division"/>
    <property type="evidence" value="ECO:0000318"/>
    <property type="project" value="GO_Central"/>
</dbReference>
<dbReference type="GO" id="GO:0045793">
    <property type="term" value="P:positive regulation of cell size"/>
    <property type="evidence" value="ECO:0000318"/>
    <property type="project" value="GO_Central"/>
</dbReference>
<dbReference type="GO" id="GO:0032877">
    <property type="term" value="P:positive regulation of DNA endoreduplication"/>
    <property type="evidence" value="ECO:0000318"/>
    <property type="project" value="GO_Central"/>
</dbReference>
<dbReference type="GO" id="GO:0009826">
    <property type="term" value="P:unidimensional cell growth"/>
    <property type="evidence" value="ECO:0000318"/>
    <property type="project" value="GO_Central"/>
</dbReference>
<dbReference type="CDD" id="cd02220">
    <property type="entry name" value="cupin_ABP1"/>
    <property type="match status" value="1"/>
</dbReference>
<dbReference type="FunFam" id="2.60.120.10:FF:000080">
    <property type="entry name" value="Auxin-binding protein 1"/>
    <property type="match status" value="1"/>
</dbReference>
<dbReference type="Gene3D" id="2.60.120.10">
    <property type="entry name" value="Jelly Rolls"/>
    <property type="match status" value="1"/>
</dbReference>
<dbReference type="InterPro" id="IPR000526">
    <property type="entry name" value="Auxin-bd"/>
</dbReference>
<dbReference type="InterPro" id="IPR014710">
    <property type="entry name" value="RmlC-like_jellyroll"/>
</dbReference>
<dbReference type="InterPro" id="IPR011051">
    <property type="entry name" value="RmlC_Cupin_sf"/>
</dbReference>
<dbReference type="PANTHER" id="PTHR37236">
    <property type="entry name" value="AUXIN-BINDING PROTEIN 1"/>
    <property type="match status" value="1"/>
</dbReference>
<dbReference type="PANTHER" id="PTHR37236:SF1">
    <property type="entry name" value="AUXIN-BINDING PROTEIN 1"/>
    <property type="match status" value="1"/>
</dbReference>
<dbReference type="Pfam" id="PF02041">
    <property type="entry name" value="Auxin_BP"/>
    <property type="match status" value="1"/>
</dbReference>
<dbReference type="PRINTS" id="PR00655">
    <property type="entry name" value="AUXINBINDNGP"/>
</dbReference>
<dbReference type="SUPFAM" id="SSF51182">
    <property type="entry name" value="RmlC-like cupins"/>
    <property type="match status" value="1"/>
</dbReference>
<dbReference type="PROSITE" id="PS00014">
    <property type="entry name" value="ER_TARGET"/>
    <property type="match status" value="1"/>
</dbReference>
<accession>P13689</accession>
<accession>Q41193</accession>
<sequence>MAPDLSELAAAAAARGAYLAGVGVAVLLAASFLPVAESSCVRDNSLVRDISQMPQSSYGIEGLSHITVAGALNHGMKEVEVWLQTISPGQRTPIHRHSCEEVFTVLKGKGTLLMGSSSLKYPGQPQEIPFFQNTTFSIPVNDPHQVWNSDEHEDLQVLVIISRPPAKIFLYDDWSMPHTAAVLKFPFVWDEDCFEAAKDEL</sequence>
<reference key="1">
    <citation type="journal article" date="1989" name="EMBO J.">
        <title>Molecular cloning and structural analysis of a gene from Zea mays (L.) coding for a putative receptor for the plant hormone auxin.</title>
        <authorList>
            <person name="Hesse T."/>
            <person name="Feldwisch J."/>
            <person name="Balshuesemann D."/>
            <person name="Bauw G."/>
            <person name="Puype M."/>
            <person name="Vandekerckhove J."/>
            <person name="Loebler M."/>
            <person name="Klaembt D."/>
            <person name="Schell J."/>
            <person name="Palme K."/>
        </authorList>
    </citation>
    <scope>NUCLEOTIDE SEQUENCE [MRNA]</scope>
    <scope>PROTEIN SEQUENCE OF 39-67; 78-91; 110-119 AND 185-194</scope>
    <scope>SUBCELLULAR LOCATION</scope>
    <scope>GLYCOSYLATION</scope>
    <source>
        <tissue>Coleoptile</tissue>
    </source>
</reference>
<reference key="2">
    <citation type="journal article" date="1989" name="EMBO J.">
        <title>cDNA clones of the auxin-binding protein from corn coleoptiles (Zea mays L.): isolation and characterization by immunological methods.</title>
        <authorList>
            <person name="Tillmann U."/>
            <person name="Viola G."/>
            <person name="Kayser B."/>
            <person name="Siemeister G."/>
            <person name="Hesse T."/>
            <person name="Palme K."/>
            <person name="Loebler M."/>
            <person name="Klaembt D."/>
        </authorList>
    </citation>
    <scope>NUCLEOTIDE SEQUENCE [MRNA]</scope>
</reference>
<reference key="3">
    <citation type="journal article" date="1989" name="Proc. Natl. Acad. Sci. U.S.A.">
        <title>Auxin-binding protein located in the endoplasmic reticulum of maize shoots: molecular cloning and complete primary structure.</title>
        <authorList>
            <person name="Inohara N."/>
            <person name="Shimomura S."/>
            <person name="Fukui T."/>
            <person name="Futai M."/>
        </authorList>
    </citation>
    <scope>NUCLEOTIDE SEQUENCE [MRNA]</scope>
    <scope>PROTEIN SEQUENCE OF 39-69</scope>
    <source>
        <strain>cv. Golden cross Bantam</strain>
    </source>
</reference>
<reference key="4">
    <citation type="journal article" date="1991" name="Plant Mol. Biol.">
        <title>Structure and sequence of an auxin-binding protein gene from maize (Zea mays L.).</title>
        <authorList>
            <person name="Yu L.X."/>
            <person name="Lazarus C.M."/>
        </authorList>
    </citation>
    <scope>NUCLEOTIDE SEQUENCE [GENOMIC DNA]</scope>
    <source>
        <strain>cv. LG11</strain>
        <tissue>Shoot</tissue>
    </source>
</reference>
<reference key="5">
    <citation type="journal article" date="1991" name="Symp. Soc. Exp. Biol.">
        <title>Auxin-binding protein -- antibodies and genes.</title>
        <authorList>
            <person name="Lazarus C.M."/>
            <person name="Napier R.M."/>
            <person name="Yu L.X."/>
            <person name="Lynas C."/>
            <person name="Venis M.A."/>
        </authorList>
    </citation>
    <scope>NUCLEOTIDE SEQUENCE [MRNA]</scope>
    <scope>VARIANT GLY-13</scope>
</reference>
<reference key="6">
    <citation type="journal article" date="1993" name="Plant J.">
        <title>Molecular analysis of three maize 22 kDa auxin-binding protein genes -- transient promoter expression and regulatory regions.</title>
        <authorList>
            <person name="Schwob E."/>
            <person name="Choi S.-Y."/>
            <person name="Simmons C."/>
            <person name="Migliaccio F."/>
            <person name="Ilag L."/>
            <person name="Hesse T."/>
            <person name="Palme K."/>
            <person name="Soell D."/>
        </authorList>
    </citation>
    <scope>NUCLEOTIDE SEQUENCE [GENOMIC DNA]</scope>
    <scope>TISSUE SPECIFICITY</scope>
    <source>
        <strain>cv. Wisconsin 22</strain>
    </source>
</reference>
<reference key="7">
    <citation type="journal article" date="1991" name="Trends Biochem. Sci.">
        <title>From auxin-binding protein to plant hormone receptor?</title>
        <authorList>
            <person name="Napier R.M."/>
            <person name="Venis M.A."/>
        </authorList>
    </citation>
    <scope>REVIEW</scope>
</reference>
<reference key="8">
    <citation type="journal article" date="2001" name="FEBS Lett.">
        <title>Mass spectrometric analysis reveals a cysteine bridge between residues 2 and 61 of the auxin-binding protein 1 from Zea mays L.</title>
        <authorList>
            <person name="Feckler C."/>
            <person name="Muster G."/>
            <person name="Feser W."/>
            <person name="Romer A."/>
            <person name="Palme K."/>
        </authorList>
    </citation>
    <scope>PRELIMINARY DISULFIDE BOND</scope>
</reference>
<reference evidence="11 12" key="9">
    <citation type="journal article" date="2002" name="EMBO J.">
        <title>Crystal structure of auxin-binding protein 1 in complex with auxin.</title>
        <authorList>
            <person name="Woo E.J."/>
            <person name="Marshall J."/>
            <person name="Bauly J."/>
            <person name="Chen J.G."/>
            <person name="Venis M."/>
            <person name="Napier R.M."/>
            <person name="Pickersgill R.W."/>
        </authorList>
    </citation>
    <scope>X-RAY CRYSTALLOGRAPHY (1.9 ANGSTROMS) OF 39-201 IN COMPLEX WITH THE SYNTHETIC AUXIN 1-NAPHTHALENEACETATE AND ZINC ION</scope>
    <scope>GLYCOSYLATION AT ASN-133</scope>
    <scope>MUTAGENESIS OF 199-ASP-GLU-200</scope>
    <scope>DISULFIDE BOND</scope>
    <scope>SUBUNIT</scope>
</reference>
<name>ABP1_MAIZE</name>
<feature type="signal peptide" evidence="4 5">
    <location>
        <begin position="1"/>
        <end position="38"/>
    </location>
</feature>
<feature type="chain" id="PRO_0000020614" description="Auxin-binding protein 1">
    <location>
        <begin position="39"/>
        <end position="201"/>
    </location>
</feature>
<feature type="short sequence motif" description="Prevents secretion from ER" evidence="1">
    <location>
        <begin position="198"/>
        <end position="201"/>
    </location>
</feature>
<feature type="binding site" evidence="2">
    <location>
        <position position="95"/>
    </location>
    <ligand>
        <name>Zn(2+)</name>
        <dbReference type="ChEBI" id="CHEBI:29105"/>
    </ligand>
</feature>
<feature type="binding site" evidence="2">
    <location>
        <position position="97"/>
    </location>
    <ligand>
        <name>Zn(2+)</name>
        <dbReference type="ChEBI" id="CHEBI:29105"/>
    </ligand>
</feature>
<feature type="binding site" evidence="2">
    <location>
        <position position="101"/>
    </location>
    <ligand>
        <name>Zn(2+)</name>
        <dbReference type="ChEBI" id="CHEBI:29105"/>
    </ligand>
</feature>
<feature type="binding site" evidence="2">
    <location>
        <position position="144"/>
    </location>
    <ligand>
        <name>Zn(2+)</name>
        <dbReference type="ChEBI" id="CHEBI:29105"/>
    </ligand>
</feature>
<feature type="glycosylation site" description="N-linked (GlcNAc...) asparagine" evidence="2">
    <location>
        <position position="133"/>
    </location>
</feature>
<feature type="disulfide bond" evidence="2">
    <location>
        <begin position="40"/>
        <end position="193"/>
    </location>
</feature>
<feature type="sequence variant" evidence="3">
    <original>A</original>
    <variation>G</variation>
    <location>
        <position position="13"/>
    </location>
</feature>
<feature type="sequence variant">
    <original>N</original>
    <variation>S</variation>
    <location>
        <position position="141"/>
    </location>
</feature>
<feature type="mutagenesis site" description="Prevents ER retention." evidence="2">
    <original>DE</original>
    <variation>EQ</variation>
    <location>
        <begin position="199"/>
        <end position="200"/>
    </location>
</feature>
<feature type="strand" evidence="13">
    <location>
        <begin position="46"/>
        <end position="49"/>
    </location>
</feature>
<feature type="helix" evidence="13">
    <location>
        <begin position="50"/>
        <end position="52"/>
    </location>
</feature>
<feature type="strand" evidence="13">
    <location>
        <begin position="63"/>
        <end position="69"/>
    </location>
</feature>
<feature type="helix" evidence="13">
    <location>
        <begin position="71"/>
        <end position="74"/>
    </location>
</feature>
<feature type="strand" evidence="13">
    <location>
        <begin position="77"/>
        <end position="86"/>
    </location>
</feature>
<feature type="strand" evidence="13">
    <location>
        <begin position="94"/>
        <end position="99"/>
    </location>
</feature>
<feature type="strand" evidence="13">
    <location>
        <begin position="101"/>
        <end position="107"/>
    </location>
</feature>
<feature type="strand" evidence="13">
    <location>
        <begin position="110"/>
        <end position="114"/>
    </location>
</feature>
<feature type="strand" evidence="13">
    <location>
        <begin position="117"/>
        <end position="121"/>
    </location>
</feature>
<feature type="strand" evidence="13">
    <location>
        <begin position="126"/>
        <end position="130"/>
    </location>
</feature>
<feature type="strand" evidence="13">
    <location>
        <begin position="134"/>
        <end position="138"/>
    </location>
</feature>
<feature type="strand" evidence="13">
    <location>
        <begin position="144"/>
        <end position="147"/>
    </location>
</feature>
<feature type="strand" evidence="13">
    <location>
        <begin position="151"/>
        <end position="153"/>
    </location>
</feature>
<feature type="strand" evidence="13">
    <location>
        <begin position="155"/>
        <end position="165"/>
    </location>
</feature>
<feature type="strand" evidence="13">
    <location>
        <begin position="168"/>
        <end position="173"/>
    </location>
</feature>
<feature type="helix" evidence="13">
    <location>
        <begin position="178"/>
        <end position="180"/>
    </location>
</feature>
<feature type="strand" evidence="13">
    <location>
        <begin position="182"/>
        <end position="186"/>
    </location>
</feature>
<feature type="turn" evidence="13">
    <location>
        <begin position="188"/>
        <end position="190"/>
    </location>
</feature>
<feature type="helix" evidence="13">
    <location>
        <begin position="191"/>
        <end position="196"/>
    </location>
</feature>
<evidence type="ECO:0000255" key="1"/>
<evidence type="ECO:0000269" key="2">
    <source>
    </source>
</evidence>
<evidence type="ECO:0000269" key="3">
    <source>
    </source>
</evidence>
<evidence type="ECO:0000269" key="4">
    <source>
    </source>
</evidence>
<evidence type="ECO:0000269" key="5">
    <source>
    </source>
</evidence>
<evidence type="ECO:0000269" key="6">
    <source>
    </source>
</evidence>
<evidence type="ECO:0000303" key="7">
    <source>
    </source>
</evidence>
<evidence type="ECO:0000303" key="8">
    <source>
    </source>
</evidence>
<evidence type="ECO:0000303" key="9">
    <source>
    </source>
</evidence>
<evidence type="ECO:0000305" key="10">
    <source>
    </source>
</evidence>
<evidence type="ECO:0007744" key="11">
    <source>
        <dbReference type="PDB" id="1LR5"/>
    </source>
</evidence>
<evidence type="ECO:0007744" key="12">
    <source>
        <dbReference type="PDB" id="1LRH"/>
    </source>
</evidence>
<evidence type="ECO:0007829" key="13">
    <source>
        <dbReference type="PDB" id="1LR5"/>
    </source>
</evidence>